<reference key="1">
    <citation type="journal article" date="2001" name="DNA Res.">
        <title>Complete genome sequence of an aerobic thermoacidophilic Crenarchaeon, Sulfolobus tokodaii strain7.</title>
        <authorList>
            <person name="Kawarabayasi Y."/>
            <person name="Hino Y."/>
            <person name="Horikawa H."/>
            <person name="Jin-no K."/>
            <person name="Takahashi M."/>
            <person name="Sekine M."/>
            <person name="Baba S."/>
            <person name="Ankai A."/>
            <person name="Kosugi H."/>
            <person name="Hosoyama A."/>
            <person name="Fukui S."/>
            <person name="Nagai Y."/>
            <person name="Nishijima K."/>
            <person name="Otsuka R."/>
            <person name="Nakazawa H."/>
            <person name="Takamiya M."/>
            <person name="Kato Y."/>
            <person name="Yoshizawa T."/>
            <person name="Tanaka T."/>
            <person name="Kudoh Y."/>
            <person name="Yamazaki J."/>
            <person name="Kushida N."/>
            <person name="Oguchi A."/>
            <person name="Aoki K."/>
            <person name="Masuda S."/>
            <person name="Yanagii M."/>
            <person name="Nishimura M."/>
            <person name="Yamagishi A."/>
            <person name="Oshima T."/>
            <person name="Kikuchi H."/>
        </authorList>
    </citation>
    <scope>NUCLEOTIDE SEQUENCE [LARGE SCALE GENOMIC DNA]</scope>
    <source>
        <strain>DSM 16993 / JCM 10545 / NBRC 100140 / 7</strain>
    </source>
</reference>
<evidence type="ECO:0000255" key="1">
    <source>
        <dbReference type="HAMAP-Rule" id="MF_00289"/>
    </source>
</evidence>
<evidence type="ECO:0000305" key="2"/>
<organism>
    <name type="scientific">Sulfurisphaera tokodaii (strain DSM 16993 / JCM 10545 / NBRC 100140 / 7)</name>
    <name type="common">Sulfolobus tokodaii</name>
    <dbReference type="NCBI Taxonomy" id="273063"/>
    <lineage>
        <taxon>Archaea</taxon>
        <taxon>Thermoproteota</taxon>
        <taxon>Thermoprotei</taxon>
        <taxon>Sulfolobales</taxon>
        <taxon>Sulfolobaceae</taxon>
        <taxon>Sulfurisphaera</taxon>
    </lineage>
</organism>
<sequence>MAFGPAAMGYDRAITIFSPDGSLYQVDYAFEAVKKGWTTLGVKTKAGVVLIGEKRKATQLLDVDSIEKVFILDDHVGCSFAGLASDGRILIDYARSQALQHRLIYDEPINIDYLTKLVSDVKQMYTQHGGVRPFGVALIIGGIDRGKTPKLLMTEPSGQFMPYYAVAIGQGGYTATEYFEKNYREDLNMQDTILLGIRALASTLKPGEKLAPSNIEVGFADVDSGMFRKMSFEERASILQKL</sequence>
<feature type="chain" id="PRO_0000124188" description="Proteasome subunit alpha">
    <location>
        <begin position="1"/>
        <end position="242"/>
    </location>
</feature>
<protein>
    <recommendedName>
        <fullName evidence="1">Proteasome subunit alpha</fullName>
    </recommendedName>
    <alternativeName>
        <fullName evidence="1">20S proteasome alpha subunit</fullName>
    </alternativeName>
    <alternativeName>
        <fullName evidence="1">Proteasome core protein PsmA</fullName>
    </alternativeName>
</protein>
<keyword id="KW-0963">Cytoplasm</keyword>
<keyword id="KW-0647">Proteasome</keyword>
<keyword id="KW-1185">Reference proteome</keyword>
<comment type="function">
    <text evidence="1">Component of the proteasome core, a large protease complex with broad specificity involved in protein degradation.</text>
</comment>
<comment type="activity regulation">
    <text evidence="1">The formation of the proteasomal ATPase PAN-20S proteasome complex, via the docking of the C-termini of PAN into the intersubunit pockets in the alpha-rings, triggers opening of the gate for substrate entry. Interconversion between the open-gate and close-gate conformations leads to a dynamic regulation of the 20S proteasome proteolysis activity.</text>
</comment>
<comment type="subunit">
    <text evidence="1">The 20S proteasome core is composed of 14 alpha and 14 beta subunits that assemble into four stacked heptameric rings, resulting in a barrel-shaped structure. The two inner rings, each composed of seven catalytic beta subunits, are sandwiched by two outer rings, each composed of seven alpha subunits. The catalytic chamber with the active sites is on the inside of the barrel. Has a gated structure, the ends of the cylinder being occluded by the N-termini of the alpha-subunits. Is capped at one or both ends by the proteasome regulatory ATPase, PAN.</text>
</comment>
<comment type="subcellular location">
    <subcellularLocation>
        <location evidence="1">Cytoplasm</location>
    </subcellularLocation>
</comment>
<comment type="similarity">
    <text evidence="1">Belongs to the peptidase T1A family.</text>
</comment>
<comment type="sequence caution" evidence="2">
    <conflict type="erroneous initiation">
        <sequence resource="EMBL-CDS" id="BAB65436"/>
    </conflict>
</comment>
<name>PSA_SULTO</name>
<gene>
    <name evidence="1" type="primary">psmA</name>
    <name type="ordered locus">STK_04460</name>
</gene>
<dbReference type="EMBL" id="BA000023">
    <property type="protein sequence ID" value="BAB65436.1"/>
    <property type="status" value="ALT_INIT"/>
    <property type="molecule type" value="Genomic_DNA"/>
</dbReference>
<dbReference type="RefSeq" id="WP_052846326.1">
    <property type="nucleotide sequence ID" value="NC_003106.2"/>
</dbReference>
<dbReference type="SMR" id="Q975G5"/>
<dbReference type="STRING" id="273063.STK_04460"/>
<dbReference type="GeneID" id="95643446"/>
<dbReference type="KEGG" id="sto:STK_04460"/>
<dbReference type="PATRIC" id="fig|273063.9.peg.518"/>
<dbReference type="eggNOG" id="arCOG00971">
    <property type="taxonomic scope" value="Archaea"/>
</dbReference>
<dbReference type="OrthoDB" id="9421at2157"/>
<dbReference type="Proteomes" id="UP000001015">
    <property type="component" value="Chromosome"/>
</dbReference>
<dbReference type="GO" id="GO:0005737">
    <property type="term" value="C:cytoplasm"/>
    <property type="evidence" value="ECO:0007669"/>
    <property type="project" value="UniProtKB-SubCell"/>
</dbReference>
<dbReference type="GO" id="GO:0019773">
    <property type="term" value="C:proteasome core complex, alpha-subunit complex"/>
    <property type="evidence" value="ECO:0000250"/>
    <property type="project" value="UniProtKB"/>
</dbReference>
<dbReference type="GO" id="GO:0004298">
    <property type="term" value="F:threonine-type endopeptidase activity"/>
    <property type="evidence" value="ECO:0007669"/>
    <property type="project" value="InterPro"/>
</dbReference>
<dbReference type="GO" id="GO:0010498">
    <property type="term" value="P:proteasomal protein catabolic process"/>
    <property type="evidence" value="ECO:0007669"/>
    <property type="project" value="UniProtKB-UniRule"/>
</dbReference>
<dbReference type="GO" id="GO:0006511">
    <property type="term" value="P:ubiquitin-dependent protein catabolic process"/>
    <property type="evidence" value="ECO:0007669"/>
    <property type="project" value="InterPro"/>
</dbReference>
<dbReference type="CDD" id="cd03756">
    <property type="entry name" value="proteasome_alpha_archeal"/>
    <property type="match status" value="1"/>
</dbReference>
<dbReference type="FunFam" id="3.60.20.10:FF:000004">
    <property type="entry name" value="Proteasome subunit alpha type-4"/>
    <property type="match status" value="1"/>
</dbReference>
<dbReference type="Gene3D" id="3.60.20.10">
    <property type="entry name" value="Glutamine Phosphoribosylpyrophosphate, subunit 1, domain 1"/>
    <property type="match status" value="1"/>
</dbReference>
<dbReference type="HAMAP" id="MF_00289_A">
    <property type="entry name" value="Proteasome_A_A"/>
    <property type="match status" value="1"/>
</dbReference>
<dbReference type="InterPro" id="IPR029055">
    <property type="entry name" value="Ntn_hydrolases_N"/>
</dbReference>
<dbReference type="InterPro" id="IPR050115">
    <property type="entry name" value="Proteasome_alpha"/>
</dbReference>
<dbReference type="InterPro" id="IPR023332">
    <property type="entry name" value="Proteasome_alpha-type"/>
</dbReference>
<dbReference type="InterPro" id="IPR019982">
    <property type="entry name" value="Proteasome_asu_arc"/>
</dbReference>
<dbReference type="InterPro" id="IPR000426">
    <property type="entry name" value="Proteasome_asu_N"/>
</dbReference>
<dbReference type="InterPro" id="IPR001353">
    <property type="entry name" value="Proteasome_sua/b"/>
</dbReference>
<dbReference type="NCBIfam" id="TIGR03633">
    <property type="entry name" value="arc_protsome_A"/>
    <property type="match status" value="1"/>
</dbReference>
<dbReference type="NCBIfam" id="NF003075">
    <property type="entry name" value="PRK03996.1"/>
    <property type="match status" value="1"/>
</dbReference>
<dbReference type="PANTHER" id="PTHR11599">
    <property type="entry name" value="PROTEASOME SUBUNIT ALPHA/BETA"/>
    <property type="match status" value="1"/>
</dbReference>
<dbReference type="Pfam" id="PF00227">
    <property type="entry name" value="Proteasome"/>
    <property type="match status" value="1"/>
</dbReference>
<dbReference type="Pfam" id="PF10584">
    <property type="entry name" value="Proteasome_A_N"/>
    <property type="match status" value="1"/>
</dbReference>
<dbReference type="SMART" id="SM00948">
    <property type="entry name" value="Proteasome_A_N"/>
    <property type="match status" value="1"/>
</dbReference>
<dbReference type="SUPFAM" id="SSF56235">
    <property type="entry name" value="N-terminal nucleophile aminohydrolases (Ntn hydrolases)"/>
    <property type="match status" value="1"/>
</dbReference>
<dbReference type="PROSITE" id="PS00388">
    <property type="entry name" value="PROTEASOME_ALPHA_1"/>
    <property type="match status" value="1"/>
</dbReference>
<dbReference type="PROSITE" id="PS51475">
    <property type="entry name" value="PROTEASOME_ALPHA_2"/>
    <property type="match status" value="1"/>
</dbReference>
<proteinExistence type="inferred from homology"/>
<accession>Q975G5</accession>